<protein>
    <recommendedName>
        <fullName evidence="1">Peptide chain release factor 1</fullName>
        <shortName evidence="1">RF-1</shortName>
    </recommendedName>
</protein>
<name>RF1_PECAS</name>
<proteinExistence type="inferred from homology"/>
<accession>Q6D551</accession>
<sequence>MKPSIVAKLEALQERHEEVQALLGEPSVIADMDRFRALSREYAQLTDITRCFQQWQQAQEDQQTAEMMLDDPEMRDMAQEELKEGKAAIEALEQELQVLLLPKDPDDERGCFLEVRAGTGGDEAAIFAGDLFRMYSRYAESRRWRVEVMSASDGEHGGYKEVIAKISGDGVYGQLKFESGGHRVQRVPATESQGRIHTSACTVAVMAAVPEAELPDINPSDLRIDTFRSSGAGGQHVNTTDSAIRITHLPTGIVVECQDERSQHKNKAKALSVLGARIRAAEIHKRQQEEASTRRNLLGSGDRSDRIRTYNFPQGRVTDHRINLTLYRLDEVMEGKLDALIQPVVQEYQADQLAALSEQE</sequence>
<reference key="1">
    <citation type="journal article" date="2004" name="Proc. Natl. Acad. Sci. U.S.A.">
        <title>Genome sequence of the enterobacterial phytopathogen Erwinia carotovora subsp. atroseptica and characterization of virulence factors.</title>
        <authorList>
            <person name="Bell K.S."/>
            <person name="Sebaihia M."/>
            <person name="Pritchard L."/>
            <person name="Holden M.T.G."/>
            <person name="Hyman L.J."/>
            <person name="Holeva M.C."/>
            <person name="Thomson N.R."/>
            <person name="Bentley S.D."/>
            <person name="Churcher L.J.C."/>
            <person name="Mungall K."/>
            <person name="Atkin R."/>
            <person name="Bason N."/>
            <person name="Brooks K."/>
            <person name="Chillingworth T."/>
            <person name="Clark K."/>
            <person name="Doggett J."/>
            <person name="Fraser A."/>
            <person name="Hance Z."/>
            <person name="Hauser H."/>
            <person name="Jagels K."/>
            <person name="Moule S."/>
            <person name="Norbertczak H."/>
            <person name="Ormond D."/>
            <person name="Price C."/>
            <person name="Quail M.A."/>
            <person name="Sanders M."/>
            <person name="Walker D."/>
            <person name="Whitehead S."/>
            <person name="Salmond G.P.C."/>
            <person name="Birch P.R.J."/>
            <person name="Parkhill J."/>
            <person name="Toth I.K."/>
        </authorList>
    </citation>
    <scope>NUCLEOTIDE SEQUENCE [LARGE SCALE GENOMIC DNA]</scope>
    <source>
        <strain>SCRI 1043 / ATCC BAA-672</strain>
    </source>
</reference>
<keyword id="KW-0963">Cytoplasm</keyword>
<keyword id="KW-0488">Methylation</keyword>
<keyword id="KW-0648">Protein biosynthesis</keyword>
<keyword id="KW-1185">Reference proteome</keyword>
<comment type="function">
    <text evidence="1">Peptide chain release factor 1 directs the termination of translation in response to the peptide chain termination codons UAG and UAA.</text>
</comment>
<comment type="subcellular location">
    <subcellularLocation>
        <location evidence="1">Cytoplasm</location>
    </subcellularLocation>
</comment>
<comment type="PTM">
    <text evidence="1">Methylated by PrmC. Methylation increases the termination efficiency of RF1.</text>
</comment>
<comment type="similarity">
    <text evidence="1">Belongs to the prokaryotic/mitochondrial release factor family.</text>
</comment>
<feature type="chain" id="PRO_0000177672" description="Peptide chain release factor 1">
    <location>
        <begin position="1"/>
        <end position="360"/>
    </location>
</feature>
<feature type="region of interest" description="Disordered" evidence="2">
    <location>
        <begin position="284"/>
        <end position="305"/>
    </location>
</feature>
<feature type="compositionally biased region" description="Basic and acidic residues" evidence="2">
    <location>
        <begin position="284"/>
        <end position="293"/>
    </location>
</feature>
<feature type="modified residue" description="N5-methylglutamine" evidence="1">
    <location>
        <position position="235"/>
    </location>
</feature>
<dbReference type="EMBL" id="BX950851">
    <property type="protein sequence ID" value="CAG75092.1"/>
    <property type="molecule type" value="Genomic_DNA"/>
</dbReference>
<dbReference type="RefSeq" id="WP_011093749.1">
    <property type="nucleotide sequence ID" value="NC_004547.2"/>
</dbReference>
<dbReference type="SMR" id="Q6D551"/>
<dbReference type="STRING" id="218491.ECA2190"/>
<dbReference type="GeneID" id="57209088"/>
<dbReference type="KEGG" id="eca:ECA2190"/>
<dbReference type="PATRIC" id="fig|218491.5.peg.2224"/>
<dbReference type="eggNOG" id="COG0216">
    <property type="taxonomic scope" value="Bacteria"/>
</dbReference>
<dbReference type="HOGENOM" id="CLU_036856_0_1_6"/>
<dbReference type="OrthoDB" id="9806673at2"/>
<dbReference type="Proteomes" id="UP000007966">
    <property type="component" value="Chromosome"/>
</dbReference>
<dbReference type="GO" id="GO:0005737">
    <property type="term" value="C:cytoplasm"/>
    <property type="evidence" value="ECO:0007669"/>
    <property type="project" value="UniProtKB-SubCell"/>
</dbReference>
<dbReference type="GO" id="GO:0016149">
    <property type="term" value="F:translation release factor activity, codon specific"/>
    <property type="evidence" value="ECO:0007669"/>
    <property type="project" value="UniProtKB-UniRule"/>
</dbReference>
<dbReference type="FunFam" id="3.30.160.20:FF:000004">
    <property type="entry name" value="Peptide chain release factor 1"/>
    <property type="match status" value="1"/>
</dbReference>
<dbReference type="FunFam" id="3.30.70.1660:FF:000002">
    <property type="entry name" value="Peptide chain release factor 1"/>
    <property type="match status" value="1"/>
</dbReference>
<dbReference type="FunFam" id="3.30.70.1660:FF:000004">
    <property type="entry name" value="Peptide chain release factor 1"/>
    <property type="match status" value="1"/>
</dbReference>
<dbReference type="Gene3D" id="3.30.160.20">
    <property type="match status" value="1"/>
</dbReference>
<dbReference type="Gene3D" id="3.30.70.1660">
    <property type="match status" value="1"/>
</dbReference>
<dbReference type="Gene3D" id="6.10.140.1950">
    <property type="match status" value="1"/>
</dbReference>
<dbReference type="HAMAP" id="MF_00093">
    <property type="entry name" value="Rel_fac_1"/>
    <property type="match status" value="1"/>
</dbReference>
<dbReference type="InterPro" id="IPR005139">
    <property type="entry name" value="PCRF"/>
</dbReference>
<dbReference type="InterPro" id="IPR000352">
    <property type="entry name" value="Pep_chain_release_fac_I"/>
</dbReference>
<dbReference type="InterPro" id="IPR045853">
    <property type="entry name" value="Pep_chain_release_fac_I_sf"/>
</dbReference>
<dbReference type="InterPro" id="IPR050057">
    <property type="entry name" value="Prokaryotic/Mito_RF"/>
</dbReference>
<dbReference type="InterPro" id="IPR004373">
    <property type="entry name" value="RF-1"/>
</dbReference>
<dbReference type="NCBIfam" id="TIGR00019">
    <property type="entry name" value="prfA"/>
    <property type="match status" value="1"/>
</dbReference>
<dbReference type="NCBIfam" id="NF001859">
    <property type="entry name" value="PRK00591.1"/>
    <property type="match status" value="1"/>
</dbReference>
<dbReference type="PANTHER" id="PTHR43804">
    <property type="entry name" value="LD18447P"/>
    <property type="match status" value="1"/>
</dbReference>
<dbReference type="PANTHER" id="PTHR43804:SF7">
    <property type="entry name" value="LD18447P"/>
    <property type="match status" value="1"/>
</dbReference>
<dbReference type="Pfam" id="PF03462">
    <property type="entry name" value="PCRF"/>
    <property type="match status" value="1"/>
</dbReference>
<dbReference type="Pfam" id="PF00472">
    <property type="entry name" value="RF-1"/>
    <property type="match status" value="1"/>
</dbReference>
<dbReference type="SMART" id="SM00937">
    <property type="entry name" value="PCRF"/>
    <property type="match status" value="1"/>
</dbReference>
<dbReference type="SUPFAM" id="SSF75620">
    <property type="entry name" value="Release factor"/>
    <property type="match status" value="1"/>
</dbReference>
<dbReference type="PROSITE" id="PS00745">
    <property type="entry name" value="RF_PROK_I"/>
    <property type="match status" value="1"/>
</dbReference>
<gene>
    <name evidence="1" type="primary">prfA</name>
    <name type="ordered locus">ECA2190</name>
</gene>
<organism>
    <name type="scientific">Pectobacterium atrosepticum (strain SCRI 1043 / ATCC BAA-672)</name>
    <name type="common">Erwinia carotovora subsp. atroseptica</name>
    <dbReference type="NCBI Taxonomy" id="218491"/>
    <lineage>
        <taxon>Bacteria</taxon>
        <taxon>Pseudomonadati</taxon>
        <taxon>Pseudomonadota</taxon>
        <taxon>Gammaproteobacteria</taxon>
        <taxon>Enterobacterales</taxon>
        <taxon>Pectobacteriaceae</taxon>
        <taxon>Pectobacterium</taxon>
    </lineage>
</organism>
<evidence type="ECO:0000255" key="1">
    <source>
        <dbReference type="HAMAP-Rule" id="MF_00093"/>
    </source>
</evidence>
<evidence type="ECO:0000256" key="2">
    <source>
        <dbReference type="SAM" id="MobiDB-lite"/>
    </source>
</evidence>